<evidence type="ECO:0000250" key="1"/>
<evidence type="ECO:0000305" key="2"/>
<evidence type="ECO:0007829" key="3">
    <source>
        <dbReference type="PDB" id="3EN1"/>
    </source>
</evidence>
<dbReference type="EC" id="1.14.12.3"/>
<dbReference type="EC" id="1.14.12.11"/>
<dbReference type="EMBL" id="J04996">
    <property type="protein sequence ID" value="AAA26006.1"/>
    <property type="molecule type" value="Genomic_DNA"/>
</dbReference>
<dbReference type="EMBL" id="CP000712">
    <property type="protein sequence ID" value="ABQ79011.1"/>
    <property type="molecule type" value="Genomic_DNA"/>
</dbReference>
<dbReference type="PIR" id="B29830">
    <property type="entry name" value="B29830"/>
</dbReference>
<dbReference type="PDB" id="3EN1">
    <property type="method" value="X-ray"/>
    <property type="resolution" value="3.20 A"/>
    <property type="chains" value="B=1-187"/>
</dbReference>
<dbReference type="PDB" id="3EQQ">
    <property type="method" value="X-ray"/>
    <property type="resolution" value="3.20 A"/>
    <property type="chains" value="B=1-187"/>
</dbReference>
<dbReference type="PDBsum" id="3EN1"/>
<dbReference type="PDBsum" id="3EQQ"/>
<dbReference type="SMR" id="A5W4F1"/>
<dbReference type="KEGG" id="ppf:Pput_2880"/>
<dbReference type="eggNOG" id="COG5517">
    <property type="taxonomic scope" value="Bacteria"/>
</dbReference>
<dbReference type="HOGENOM" id="CLU_102527_1_1_6"/>
<dbReference type="UniPathway" id="UPA00228"/>
<dbReference type="UniPathway" id="UPA00272">
    <property type="reaction ID" value="UER00391"/>
</dbReference>
<dbReference type="UniPathway" id="UPA00273"/>
<dbReference type="EvolutionaryTrace" id="A5W4F1"/>
<dbReference type="GO" id="GO:0018619">
    <property type="term" value="F:benzene 1,2-dioxygenase activity"/>
    <property type="evidence" value="ECO:0007669"/>
    <property type="project" value="UniProtKB-EC"/>
</dbReference>
<dbReference type="GO" id="GO:0018624">
    <property type="term" value="F:toluene dioxygenase activity"/>
    <property type="evidence" value="ECO:0007669"/>
    <property type="project" value="UniProtKB-EC"/>
</dbReference>
<dbReference type="GO" id="GO:0019380">
    <property type="term" value="P:3-phenylpropionate catabolic process"/>
    <property type="evidence" value="ECO:0007669"/>
    <property type="project" value="TreeGrafter"/>
</dbReference>
<dbReference type="GO" id="GO:0042203">
    <property type="term" value="P:toluene catabolic process"/>
    <property type="evidence" value="ECO:0007669"/>
    <property type="project" value="UniProtKB-UniPathway"/>
</dbReference>
<dbReference type="GO" id="GO:0042184">
    <property type="term" value="P:xylene catabolic process"/>
    <property type="evidence" value="ECO:0007669"/>
    <property type="project" value="UniProtKB-UniPathway"/>
</dbReference>
<dbReference type="CDD" id="cd00667">
    <property type="entry name" value="ring_hydroxylating_dioxygenases_beta"/>
    <property type="match status" value="1"/>
</dbReference>
<dbReference type="Gene3D" id="3.10.450.50">
    <property type="match status" value="1"/>
</dbReference>
<dbReference type="InterPro" id="IPR032710">
    <property type="entry name" value="NTF2-like_dom_sf"/>
</dbReference>
<dbReference type="InterPro" id="IPR000391">
    <property type="entry name" value="Rng_hydr_dOase-bsu"/>
</dbReference>
<dbReference type="NCBIfam" id="NF007479">
    <property type="entry name" value="PRK10069.1"/>
    <property type="match status" value="1"/>
</dbReference>
<dbReference type="PANTHER" id="PTHR41534:SF2">
    <property type="entry name" value="3-PHENYLPROPIONATE_CINNAMIC ACID DIOXYGENASE SUBUNIT BETA"/>
    <property type="match status" value="1"/>
</dbReference>
<dbReference type="PANTHER" id="PTHR41534">
    <property type="entry name" value="BLR3401 PROTEIN"/>
    <property type="match status" value="1"/>
</dbReference>
<dbReference type="Pfam" id="PF00866">
    <property type="entry name" value="Ring_hydroxyl_B"/>
    <property type="match status" value="1"/>
</dbReference>
<dbReference type="SUPFAM" id="SSF54427">
    <property type="entry name" value="NTF2-like"/>
    <property type="match status" value="1"/>
</dbReference>
<comment type="function">
    <text>Catalyzes both the oxidation of benzene and toluene. The beta subunit may be responsible for the substrate specificity of the enzyme.</text>
</comment>
<comment type="catalytic activity">
    <reaction>
        <text>benzene + NADH + O2 + H(+) = cis-1,2-dihydrobenzene-1,2-diol + NAD(+)</text>
        <dbReference type="Rhea" id="RHEA:13813"/>
        <dbReference type="ChEBI" id="CHEBI:15378"/>
        <dbReference type="ChEBI" id="CHEBI:15379"/>
        <dbReference type="ChEBI" id="CHEBI:16190"/>
        <dbReference type="ChEBI" id="CHEBI:16716"/>
        <dbReference type="ChEBI" id="CHEBI:57540"/>
        <dbReference type="ChEBI" id="CHEBI:57945"/>
        <dbReference type="EC" id="1.14.12.3"/>
    </reaction>
</comment>
<comment type="catalytic activity">
    <reaction>
        <text>toluene + NADH + O2 + H(+) = (1S,2R)-3-methylcyclohexa-3,5-diene-1,2-diol + NAD(+)</text>
        <dbReference type="Rhea" id="RHEA:16737"/>
        <dbReference type="ChEBI" id="CHEBI:15378"/>
        <dbReference type="ChEBI" id="CHEBI:15379"/>
        <dbReference type="ChEBI" id="CHEBI:15565"/>
        <dbReference type="ChEBI" id="CHEBI:17578"/>
        <dbReference type="ChEBI" id="CHEBI:57540"/>
        <dbReference type="ChEBI" id="CHEBI:57945"/>
        <dbReference type="EC" id="1.14.12.11"/>
    </reaction>
</comment>
<comment type="cofactor">
    <cofactor evidence="1">
        <name>[2Fe-2S] cluster</name>
        <dbReference type="ChEBI" id="CHEBI:190135"/>
    </cofactor>
    <text evidence="1">Binds 1 [2Fe-2S] cluster per subunit.</text>
</comment>
<comment type="cofactor">
    <cofactor evidence="1">
        <name>Fe cation</name>
        <dbReference type="ChEBI" id="CHEBI:24875"/>
    </cofactor>
    <text evidence="1">Binds 1 Fe cation per subunit.</text>
</comment>
<comment type="pathway">
    <text>Aromatic compound metabolism; benzene degradation; catechol from benzene: step 1/2.</text>
</comment>
<comment type="pathway">
    <text>Xenobiotic degradation; toluene degradation.</text>
</comment>
<comment type="pathway">
    <text>Xenobiotic degradation; xylene degradation.</text>
</comment>
<comment type="subunit">
    <text>This dioxygenase system consists of four proteins: the two subunits of the hydroxylase component (BnzA and BnzB), a ferredoxin (BnzC) and a ferredoxin reductase (BnzD).</text>
</comment>
<comment type="similarity">
    <text evidence="2">Belongs to the bacterial ring-hydroxylating dioxygenase beta subunit family.</text>
</comment>
<reference key="1">
    <citation type="journal article" date="1989" name="J. Biol. Chem.">
        <title>Toluene degradation by Pseudomonas putida F1. Nucleotide sequence of the todC1C2BADE genes and their expression in Escherichia coli.</title>
        <authorList>
            <person name="Zylstra G.J."/>
            <person name="Gibson D.T."/>
        </authorList>
    </citation>
    <scope>NUCLEOTIDE SEQUENCE [GENOMIC DNA]</scope>
    <scope>PROTEIN SEQUENCE OF 1-12</scope>
</reference>
<reference key="2">
    <citation type="submission" date="2007-05" db="EMBL/GenBank/DDBJ databases">
        <title>Complete sequence of Pseudomonas putida F1.</title>
        <authorList>
            <consortium name="US DOE Joint Genome Institute"/>
            <person name="Copeland A."/>
            <person name="Lucas S."/>
            <person name="Lapidus A."/>
            <person name="Barry K."/>
            <person name="Detter J.C."/>
            <person name="Glavina del Rio T."/>
            <person name="Hammon N."/>
            <person name="Israni S."/>
            <person name="Dalin E."/>
            <person name="Tice H."/>
            <person name="Pitluck S."/>
            <person name="Chain P."/>
            <person name="Malfatti S."/>
            <person name="Shin M."/>
            <person name="Vergez L."/>
            <person name="Schmutz J."/>
            <person name="Larimer F."/>
            <person name="Land M."/>
            <person name="Hauser L."/>
            <person name="Kyrpides N."/>
            <person name="Lykidis A."/>
            <person name="Parales R."/>
            <person name="Richardson P."/>
        </authorList>
    </citation>
    <scope>NUCLEOTIDE SEQUENCE [LARGE SCALE GENOMIC DNA]</scope>
    <source>
        <strain>ATCC 700007 / DSM 6899 / JCM 31910 / BCRC 17059 / LMG 24140 / F1</strain>
    </source>
</reference>
<proteinExistence type="evidence at protein level"/>
<name>BNZB_PSEP1</name>
<accession>A5W4F1</accession>
<accession>P08085</accession>
<accession>P13451</accession>
<keyword id="KW-0002">3D-structure</keyword>
<keyword id="KW-0058">Aromatic hydrocarbons catabolism</keyword>
<keyword id="KW-0223">Dioxygenase</keyword>
<keyword id="KW-0903">Direct protein sequencing</keyword>
<keyword id="KW-0520">NAD</keyword>
<keyword id="KW-0560">Oxidoreductase</keyword>
<organism>
    <name type="scientific">Pseudomonas putida (strain ATCC 700007 / DSM 6899 / JCM 31910 / BCRC 17059 / LMG 24140 / F1)</name>
    <dbReference type="NCBI Taxonomy" id="351746"/>
    <lineage>
        <taxon>Bacteria</taxon>
        <taxon>Pseudomonadati</taxon>
        <taxon>Pseudomonadota</taxon>
        <taxon>Gammaproteobacteria</taxon>
        <taxon>Pseudomonadales</taxon>
        <taxon>Pseudomonadaceae</taxon>
        <taxon>Pseudomonas</taxon>
    </lineage>
</organism>
<sequence>MIDSANRADVFLRKPAPVAPELQHEVEQFYYWEAKLLNDRRFEEWFALLAEDIHYFMPIRTTRIMRDSRLEYSGSREYAHFDDDATMMKGRLRKITSDVSWSENPASRTRHLVSNVMIVGAEAEGEYEISSAFIVYRNRLERQLDIFAGERRDTLRRNTSEAGFEIVNRTILIDQSTILANNLSFFF</sequence>
<protein>
    <recommendedName>
        <fullName>Benzene 1,2-dioxygenase subunit beta</fullName>
        <ecNumber>1.14.12.3</ecNumber>
    </recommendedName>
    <alternativeName>
        <fullName>Benzene 1,2-dioxygenase P2 subunit</fullName>
    </alternativeName>
    <alternativeName>
        <fullName>Toluene 2,3-dioxygenase subunit beta</fullName>
        <ecNumber>1.14.12.11</ecNumber>
    </alternativeName>
</protein>
<feature type="chain" id="PRO_0000314466" description="Benzene 1,2-dioxygenase subunit beta">
    <location>
        <begin position="1"/>
        <end position="187"/>
    </location>
</feature>
<feature type="helix" evidence="3">
    <location>
        <begin position="10"/>
        <end position="12"/>
    </location>
</feature>
<feature type="helix" evidence="3">
    <location>
        <begin position="20"/>
        <end position="38"/>
    </location>
</feature>
<feature type="helix" evidence="3">
    <location>
        <begin position="42"/>
        <end position="47"/>
    </location>
</feature>
<feature type="strand" evidence="3">
    <location>
        <begin position="49"/>
        <end position="58"/>
    </location>
</feature>
<feature type="helix" evidence="3">
    <location>
        <begin position="65"/>
        <end position="70"/>
    </location>
</feature>
<feature type="strand" evidence="3">
    <location>
        <begin position="79"/>
        <end position="83"/>
    </location>
</feature>
<feature type="helix" evidence="3">
    <location>
        <begin position="85"/>
        <end position="94"/>
    </location>
</feature>
<feature type="helix" evidence="3">
    <location>
        <begin position="101"/>
        <end position="103"/>
    </location>
</feature>
<feature type="strand" evidence="3">
    <location>
        <begin position="108"/>
        <end position="120"/>
    </location>
</feature>
<feature type="strand" evidence="3">
    <location>
        <begin position="126"/>
        <end position="139"/>
    </location>
</feature>
<feature type="turn" evidence="3">
    <location>
        <begin position="140"/>
        <end position="142"/>
    </location>
</feature>
<feature type="strand" evidence="3">
    <location>
        <begin position="143"/>
        <end position="157"/>
    </location>
</feature>
<feature type="strand" evidence="3">
    <location>
        <begin position="159"/>
        <end position="162"/>
    </location>
</feature>
<feature type="strand" evidence="3">
    <location>
        <begin position="164"/>
        <end position="174"/>
    </location>
</feature>
<feature type="strand" evidence="3">
    <location>
        <begin position="176"/>
        <end position="181"/>
    </location>
</feature>
<gene>
    <name type="primary">bnzB</name>
    <name type="synonym">todC2</name>
    <name type="ordered locus">Pput_2880</name>
</gene>